<dbReference type="EC" id="1.3.1.88" evidence="7"/>
<dbReference type="EC" id="1.3.1.-" evidence="4"/>
<dbReference type="EMBL" id="CU329671">
    <property type="protein sequence ID" value="CAC05725.1"/>
    <property type="molecule type" value="Genomic_DNA"/>
</dbReference>
<dbReference type="RefSeq" id="NP_595986.1">
    <property type="nucleotide sequence ID" value="NM_001021893.2"/>
</dbReference>
<dbReference type="SMR" id="Q9HGN6"/>
<dbReference type="FunCoup" id="Q9HGN6">
    <property type="interactions" value="357"/>
</dbReference>
<dbReference type="STRING" id="284812.Q9HGN6"/>
<dbReference type="PaxDb" id="4896-SPBC36B7.04.1"/>
<dbReference type="EnsemblFungi" id="SPBC36B7.04.1">
    <property type="protein sequence ID" value="SPBC36B7.04.1:pep"/>
    <property type="gene ID" value="SPBC36B7.04"/>
</dbReference>
<dbReference type="GeneID" id="2541048"/>
<dbReference type="KEGG" id="spo:2541048"/>
<dbReference type="PomBase" id="SPBC36B7.04">
    <property type="gene designation" value="dus1"/>
</dbReference>
<dbReference type="VEuPathDB" id="FungiDB:SPBC36B7.04"/>
<dbReference type="eggNOG" id="KOG2335">
    <property type="taxonomic scope" value="Eukaryota"/>
</dbReference>
<dbReference type="HOGENOM" id="CLU_013299_5_0_1"/>
<dbReference type="InParanoid" id="Q9HGN6"/>
<dbReference type="OMA" id="ISPPVWQ"/>
<dbReference type="PhylomeDB" id="Q9HGN6"/>
<dbReference type="PRO" id="PR:Q9HGN6"/>
<dbReference type="Proteomes" id="UP000002485">
    <property type="component" value="Chromosome II"/>
</dbReference>
<dbReference type="GO" id="GO:0005739">
    <property type="term" value="C:mitochondrion"/>
    <property type="evidence" value="ECO:0007005"/>
    <property type="project" value="PomBase"/>
</dbReference>
<dbReference type="GO" id="GO:0005634">
    <property type="term" value="C:nucleus"/>
    <property type="evidence" value="ECO:0007005"/>
    <property type="project" value="PomBase"/>
</dbReference>
<dbReference type="GO" id="GO:0050660">
    <property type="term" value="F:flavin adenine dinucleotide binding"/>
    <property type="evidence" value="ECO:0007669"/>
    <property type="project" value="InterPro"/>
</dbReference>
<dbReference type="GO" id="GO:0106414">
    <property type="term" value="F:mRNA dihydrouridine synthase activity"/>
    <property type="evidence" value="ECO:0007669"/>
    <property type="project" value="RHEA"/>
</dbReference>
<dbReference type="GO" id="GO:0017150">
    <property type="term" value="F:tRNA dihydrouridine synthase activity"/>
    <property type="evidence" value="ECO:0000318"/>
    <property type="project" value="GO_Central"/>
</dbReference>
<dbReference type="GO" id="GO:0102262">
    <property type="term" value="F:tRNA-dihydrouridine16 synthase activity"/>
    <property type="evidence" value="ECO:0000269"/>
    <property type="project" value="PomBase"/>
</dbReference>
<dbReference type="GO" id="GO:0102263">
    <property type="term" value="F:tRNA-dihydrouridine17 synthase activity"/>
    <property type="evidence" value="ECO:0000269"/>
    <property type="project" value="PomBase"/>
</dbReference>
<dbReference type="GO" id="GO:0006397">
    <property type="term" value="P:mRNA processing"/>
    <property type="evidence" value="ECO:0007669"/>
    <property type="project" value="UniProtKB-KW"/>
</dbReference>
<dbReference type="CDD" id="cd02801">
    <property type="entry name" value="DUS_like_FMN"/>
    <property type="match status" value="1"/>
</dbReference>
<dbReference type="Gene3D" id="3.20.20.70">
    <property type="entry name" value="Aldolase class I"/>
    <property type="match status" value="1"/>
</dbReference>
<dbReference type="InterPro" id="IPR013785">
    <property type="entry name" value="Aldolase_TIM"/>
</dbReference>
<dbReference type="InterPro" id="IPR035587">
    <property type="entry name" value="DUS-like_FMN-bd"/>
</dbReference>
<dbReference type="InterPro" id="IPR018517">
    <property type="entry name" value="tRNA_hU_synthase_CS"/>
</dbReference>
<dbReference type="PANTHER" id="PTHR11082">
    <property type="entry name" value="TRNA-DIHYDROURIDINE SYNTHASE"/>
    <property type="match status" value="1"/>
</dbReference>
<dbReference type="PANTHER" id="PTHR11082:SF5">
    <property type="entry name" value="TRNA-DIHYDROURIDINE(16_17) SYNTHASE [NAD(P)(+)]-LIKE"/>
    <property type="match status" value="1"/>
</dbReference>
<dbReference type="Pfam" id="PF01207">
    <property type="entry name" value="Dus"/>
    <property type="match status" value="1"/>
</dbReference>
<dbReference type="SUPFAM" id="SSF51395">
    <property type="entry name" value="FMN-linked oxidoreductases"/>
    <property type="match status" value="1"/>
</dbReference>
<dbReference type="PROSITE" id="PS01136">
    <property type="entry name" value="UPF0034"/>
    <property type="match status" value="1"/>
</dbReference>
<evidence type="ECO:0000250" key="1">
    <source>
        <dbReference type="UniProtKB" id="P53759"/>
    </source>
</evidence>
<evidence type="ECO:0000250" key="2">
    <source>
        <dbReference type="UniProtKB" id="Q5SMC7"/>
    </source>
</evidence>
<evidence type="ECO:0000269" key="3">
    <source>
    </source>
</evidence>
<evidence type="ECO:0000269" key="4">
    <source>
    </source>
</evidence>
<evidence type="ECO:0000303" key="5">
    <source>
    </source>
</evidence>
<evidence type="ECO:0000305" key="6"/>
<evidence type="ECO:0000305" key="7">
    <source>
    </source>
</evidence>
<evidence type="ECO:0000312" key="8">
    <source>
        <dbReference type="PomBase" id="SPBC36B7.04"/>
    </source>
</evidence>
<name>DUS1_SCHPO</name>
<keyword id="KW-0285">Flavoprotein</keyword>
<keyword id="KW-0288">FMN</keyword>
<keyword id="KW-0496">Mitochondrion</keyword>
<keyword id="KW-0507">mRNA processing</keyword>
<keyword id="KW-0520">NAD</keyword>
<keyword id="KW-0521">NADP</keyword>
<keyword id="KW-0539">Nucleus</keyword>
<keyword id="KW-0560">Oxidoreductase</keyword>
<keyword id="KW-1185">Reference proteome</keyword>
<keyword id="KW-0819">tRNA processing</keyword>
<sequence>MASKKLHGRDFYNKIGRPKRILAPMVDQSELPWRILARRSGADLCYSPMFHSRLFGESEDYRNKVFSTRTIPEERPLIIQFCGNDPEIMLKAAKIAAPYCDAVDVNLGCPQGIAKKGKYGSFLQENWNLIESIITKLHTELSIPVTAKIRIFPDPQKTLDYAKMILKAGASILAVHGRLREQKGHFTGIADWEQIQMLRKNLPSETVLFANGNILHAQDIDRCIKYTGVDGVLSAEGSLYNPRIFLPPSSPLMTLYPRIDDMCEEYLNIIREFKLESDYSSLSAIKGHLFKLMRPLLSIHTDIRSKLAQGCTPRDFETFPPVVAMLRKRLLECEEKGEINEDKDVKESVKDSMGYPVIPWWRVQPYIRPLEVPLVTKRKPVEVTADEGPVKKKVNASVA</sequence>
<protein>
    <recommendedName>
        <fullName>tRNA-dihydrouridine(16/17) synthase [NAD(P)(+)]</fullName>
        <ecNumber evidence="7">1.3.1.88</ecNumber>
    </recommendedName>
    <alternativeName>
        <fullName evidence="6">mRNA-dihydrouridine synthase dus1</fullName>
        <ecNumber evidence="4">1.3.1.-</ecNumber>
    </alternativeName>
    <alternativeName>
        <fullName>tRNA-dihydrouridine synthase 1</fullName>
    </alternativeName>
</protein>
<comment type="function">
    <text evidence="4">Catalyzes the synthesis of dihydrouridine, a modified base found in the D-loop of most tRNAs (PubMed:34798057). Also able to mediate dihydrouridylation of some mRNAs, thereby affecting their translation (PubMed:34798057).</text>
</comment>
<comment type="catalytic activity">
    <reaction evidence="7">
        <text>5,6-dihydrouridine(16) in tRNA + NADP(+) = uridine(16) in tRNA + NADPH + H(+)</text>
        <dbReference type="Rhea" id="RHEA:53376"/>
        <dbReference type="Rhea" id="RHEA-COMP:13543"/>
        <dbReference type="Rhea" id="RHEA-COMP:13544"/>
        <dbReference type="ChEBI" id="CHEBI:15378"/>
        <dbReference type="ChEBI" id="CHEBI:57783"/>
        <dbReference type="ChEBI" id="CHEBI:58349"/>
        <dbReference type="ChEBI" id="CHEBI:65315"/>
        <dbReference type="ChEBI" id="CHEBI:74443"/>
        <dbReference type="EC" id="1.3.1.88"/>
    </reaction>
    <physiologicalReaction direction="right-to-left" evidence="7">
        <dbReference type="Rhea" id="RHEA:53378"/>
    </physiologicalReaction>
</comment>
<comment type="catalytic activity">
    <reaction evidence="7">
        <text>5,6-dihydrouridine(16) in tRNA + NAD(+) = uridine(16) in tRNA + NADH + H(+)</text>
        <dbReference type="Rhea" id="RHEA:53380"/>
        <dbReference type="Rhea" id="RHEA-COMP:13543"/>
        <dbReference type="Rhea" id="RHEA-COMP:13544"/>
        <dbReference type="ChEBI" id="CHEBI:15378"/>
        <dbReference type="ChEBI" id="CHEBI:57540"/>
        <dbReference type="ChEBI" id="CHEBI:57945"/>
        <dbReference type="ChEBI" id="CHEBI:65315"/>
        <dbReference type="ChEBI" id="CHEBI:74443"/>
        <dbReference type="EC" id="1.3.1.88"/>
    </reaction>
    <physiologicalReaction direction="right-to-left" evidence="7">
        <dbReference type="Rhea" id="RHEA:53382"/>
    </physiologicalReaction>
</comment>
<comment type="catalytic activity">
    <reaction evidence="1">
        <text>5,6-dihydrouridine(17) in tRNA + NAD(+) = uridine(17) in tRNA + NADH + H(+)</text>
        <dbReference type="Rhea" id="RHEA:53372"/>
        <dbReference type="Rhea" id="RHEA-COMP:13541"/>
        <dbReference type="Rhea" id="RHEA-COMP:13542"/>
        <dbReference type="ChEBI" id="CHEBI:15378"/>
        <dbReference type="ChEBI" id="CHEBI:57540"/>
        <dbReference type="ChEBI" id="CHEBI:57945"/>
        <dbReference type="ChEBI" id="CHEBI:65315"/>
        <dbReference type="ChEBI" id="CHEBI:74443"/>
        <dbReference type="EC" id="1.3.1.88"/>
    </reaction>
    <physiologicalReaction direction="right-to-left" evidence="1">
        <dbReference type="Rhea" id="RHEA:53374"/>
    </physiologicalReaction>
</comment>
<comment type="catalytic activity">
    <reaction evidence="1">
        <text>5,6-dihydrouridine(17) in tRNA + NADP(+) = uridine(17) in tRNA + NADPH + H(+)</text>
        <dbReference type="Rhea" id="RHEA:53368"/>
        <dbReference type="Rhea" id="RHEA-COMP:13541"/>
        <dbReference type="Rhea" id="RHEA-COMP:13542"/>
        <dbReference type="ChEBI" id="CHEBI:15378"/>
        <dbReference type="ChEBI" id="CHEBI:57783"/>
        <dbReference type="ChEBI" id="CHEBI:58349"/>
        <dbReference type="ChEBI" id="CHEBI:65315"/>
        <dbReference type="ChEBI" id="CHEBI:74443"/>
        <dbReference type="EC" id="1.3.1.88"/>
    </reaction>
    <physiologicalReaction direction="right-to-left" evidence="1">
        <dbReference type="Rhea" id="RHEA:53370"/>
    </physiologicalReaction>
</comment>
<comment type="catalytic activity">
    <reaction evidence="4">
        <text>a 5,6-dihydrouridine in mRNA + NAD(+) = a uridine in mRNA + NADH + H(+)</text>
        <dbReference type="Rhea" id="RHEA:69851"/>
        <dbReference type="Rhea" id="RHEA-COMP:14658"/>
        <dbReference type="Rhea" id="RHEA-COMP:17789"/>
        <dbReference type="ChEBI" id="CHEBI:15378"/>
        <dbReference type="ChEBI" id="CHEBI:57540"/>
        <dbReference type="ChEBI" id="CHEBI:57945"/>
        <dbReference type="ChEBI" id="CHEBI:65315"/>
        <dbReference type="ChEBI" id="CHEBI:74443"/>
    </reaction>
    <physiologicalReaction direction="right-to-left" evidence="4">
        <dbReference type="Rhea" id="RHEA:69853"/>
    </physiologicalReaction>
</comment>
<comment type="catalytic activity">
    <reaction evidence="4">
        <text>a 5,6-dihydrouridine in mRNA + NADP(+) = a uridine in mRNA + NADPH + H(+)</text>
        <dbReference type="Rhea" id="RHEA:69855"/>
        <dbReference type="Rhea" id="RHEA-COMP:14658"/>
        <dbReference type="Rhea" id="RHEA-COMP:17789"/>
        <dbReference type="ChEBI" id="CHEBI:15378"/>
        <dbReference type="ChEBI" id="CHEBI:57783"/>
        <dbReference type="ChEBI" id="CHEBI:58349"/>
        <dbReference type="ChEBI" id="CHEBI:65315"/>
        <dbReference type="ChEBI" id="CHEBI:74443"/>
    </reaction>
    <physiologicalReaction direction="right-to-left" evidence="4">
        <dbReference type="Rhea" id="RHEA:69857"/>
    </physiologicalReaction>
</comment>
<comment type="cofactor">
    <cofactor evidence="2">
        <name>FMN</name>
        <dbReference type="ChEBI" id="CHEBI:58210"/>
    </cofactor>
</comment>
<comment type="subcellular location">
    <subcellularLocation>
        <location evidence="3">Nucleus</location>
    </subcellularLocation>
    <subcellularLocation>
        <location evidence="3">Mitochondrion</location>
    </subcellularLocation>
</comment>
<comment type="similarity">
    <text evidence="6">Belongs to the Dus family. Dus1 subfamily.</text>
</comment>
<reference key="1">
    <citation type="journal article" date="2002" name="Nature">
        <title>The genome sequence of Schizosaccharomyces pombe.</title>
        <authorList>
            <person name="Wood V."/>
            <person name="Gwilliam R."/>
            <person name="Rajandream M.A."/>
            <person name="Lyne M.H."/>
            <person name="Lyne R."/>
            <person name="Stewart A."/>
            <person name="Sgouros J.G."/>
            <person name="Peat N."/>
            <person name="Hayles J."/>
            <person name="Baker S.G."/>
            <person name="Basham D."/>
            <person name="Bowman S."/>
            <person name="Brooks K."/>
            <person name="Brown D."/>
            <person name="Brown S."/>
            <person name="Chillingworth T."/>
            <person name="Churcher C.M."/>
            <person name="Collins M."/>
            <person name="Connor R."/>
            <person name="Cronin A."/>
            <person name="Davis P."/>
            <person name="Feltwell T."/>
            <person name="Fraser A."/>
            <person name="Gentles S."/>
            <person name="Goble A."/>
            <person name="Hamlin N."/>
            <person name="Harris D.E."/>
            <person name="Hidalgo J."/>
            <person name="Hodgson G."/>
            <person name="Holroyd S."/>
            <person name="Hornsby T."/>
            <person name="Howarth S."/>
            <person name="Huckle E.J."/>
            <person name="Hunt S."/>
            <person name="Jagels K."/>
            <person name="James K.D."/>
            <person name="Jones L."/>
            <person name="Jones M."/>
            <person name="Leather S."/>
            <person name="McDonald S."/>
            <person name="McLean J."/>
            <person name="Mooney P."/>
            <person name="Moule S."/>
            <person name="Mungall K.L."/>
            <person name="Murphy L.D."/>
            <person name="Niblett D."/>
            <person name="Odell C."/>
            <person name="Oliver K."/>
            <person name="O'Neil S."/>
            <person name="Pearson D."/>
            <person name="Quail M.A."/>
            <person name="Rabbinowitsch E."/>
            <person name="Rutherford K.M."/>
            <person name="Rutter S."/>
            <person name="Saunders D."/>
            <person name="Seeger K."/>
            <person name="Sharp S."/>
            <person name="Skelton J."/>
            <person name="Simmonds M.N."/>
            <person name="Squares R."/>
            <person name="Squares S."/>
            <person name="Stevens K."/>
            <person name="Taylor K."/>
            <person name="Taylor R.G."/>
            <person name="Tivey A."/>
            <person name="Walsh S.V."/>
            <person name="Warren T."/>
            <person name="Whitehead S."/>
            <person name="Woodward J.R."/>
            <person name="Volckaert G."/>
            <person name="Aert R."/>
            <person name="Robben J."/>
            <person name="Grymonprez B."/>
            <person name="Weltjens I."/>
            <person name="Vanstreels E."/>
            <person name="Rieger M."/>
            <person name="Schaefer M."/>
            <person name="Mueller-Auer S."/>
            <person name="Gabel C."/>
            <person name="Fuchs M."/>
            <person name="Duesterhoeft A."/>
            <person name="Fritzc C."/>
            <person name="Holzer E."/>
            <person name="Moestl D."/>
            <person name="Hilbert H."/>
            <person name="Borzym K."/>
            <person name="Langer I."/>
            <person name="Beck A."/>
            <person name="Lehrach H."/>
            <person name="Reinhardt R."/>
            <person name="Pohl T.M."/>
            <person name="Eger P."/>
            <person name="Zimmermann W."/>
            <person name="Wedler H."/>
            <person name="Wambutt R."/>
            <person name="Purnelle B."/>
            <person name="Goffeau A."/>
            <person name="Cadieu E."/>
            <person name="Dreano S."/>
            <person name="Gloux S."/>
            <person name="Lelaure V."/>
            <person name="Mottier S."/>
            <person name="Galibert F."/>
            <person name="Aves S.J."/>
            <person name="Xiang Z."/>
            <person name="Hunt C."/>
            <person name="Moore K."/>
            <person name="Hurst S.M."/>
            <person name="Lucas M."/>
            <person name="Rochet M."/>
            <person name="Gaillardin C."/>
            <person name="Tallada V.A."/>
            <person name="Garzon A."/>
            <person name="Thode G."/>
            <person name="Daga R.R."/>
            <person name="Cruzado L."/>
            <person name="Jimenez J."/>
            <person name="Sanchez M."/>
            <person name="del Rey F."/>
            <person name="Benito J."/>
            <person name="Dominguez A."/>
            <person name="Revuelta J.L."/>
            <person name="Moreno S."/>
            <person name="Armstrong J."/>
            <person name="Forsburg S.L."/>
            <person name="Cerutti L."/>
            <person name="Lowe T."/>
            <person name="McCombie W.R."/>
            <person name="Paulsen I."/>
            <person name="Potashkin J."/>
            <person name="Shpakovski G.V."/>
            <person name="Ussery D."/>
            <person name="Barrell B.G."/>
            <person name="Nurse P."/>
        </authorList>
    </citation>
    <scope>NUCLEOTIDE SEQUENCE [LARGE SCALE GENOMIC DNA]</scope>
    <source>
        <strain>972 / ATCC 24843</strain>
    </source>
</reference>
<reference key="2">
    <citation type="journal article" date="2006" name="Nat. Biotechnol.">
        <title>ORFeome cloning and global analysis of protein localization in the fission yeast Schizosaccharomyces pombe.</title>
        <authorList>
            <person name="Matsuyama A."/>
            <person name="Arai R."/>
            <person name="Yashiroda Y."/>
            <person name="Shirai A."/>
            <person name="Kamata A."/>
            <person name="Sekido S."/>
            <person name="Kobayashi Y."/>
            <person name="Hashimoto A."/>
            <person name="Hamamoto M."/>
            <person name="Hiraoka Y."/>
            <person name="Horinouchi S."/>
            <person name="Yoshida M."/>
        </authorList>
    </citation>
    <scope>SUBCELLULAR LOCATION [LARGE SCALE ANALYSIS]</scope>
</reference>
<reference key="3">
    <citation type="journal article" date="2021" name="Mol. Cell">
        <title>Transcription-wide mapping of dihydrouridine reveals that mRNA dihydrouridylation is required for meiotic chromosome segregation.</title>
        <authorList>
            <person name="Finet O."/>
            <person name="Yague-Sanz C."/>
            <person name="Krueger L.K."/>
            <person name="Tran P."/>
            <person name="Migeot V."/>
            <person name="Louski M."/>
            <person name="Nevers A."/>
            <person name="Rougemaille M."/>
            <person name="Sun J."/>
            <person name="Ernst F.G.M."/>
            <person name="Wacheul L."/>
            <person name="Wery M."/>
            <person name="Morillon A."/>
            <person name="Dedon P."/>
            <person name="Lafontaine D.L.J."/>
            <person name="Hermand D."/>
        </authorList>
    </citation>
    <scope>FUNCTION</scope>
    <scope>CATALYTIC ACTIVITY</scope>
</reference>
<feature type="chain" id="PRO_0000316225" description="tRNA-dihydrouridine(16/17) synthase [NAD(P)(+)]">
    <location>
        <begin position="1"/>
        <end position="399"/>
    </location>
</feature>
<feature type="active site" description="Proton donor" evidence="2">
    <location>
        <position position="109"/>
    </location>
</feature>
<feature type="binding site" evidence="2">
    <location>
        <begin position="24"/>
        <end position="26"/>
    </location>
    <ligand>
        <name>FMN</name>
        <dbReference type="ChEBI" id="CHEBI:58210"/>
    </ligand>
</feature>
<feature type="binding site" evidence="2">
    <location>
        <position position="80"/>
    </location>
    <ligand>
        <name>FMN</name>
        <dbReference type="ChEBI" id="CHEBI:58210"/>
    </ligand>
</feature>
<feature type="binding site" evidence="2">
    <location>
        <position position="148"/>
    </location>
    <ligand>
        <name>FMN</name>
        <dbReference type="ChEBI" id="CHEBI:58210"/>
    </ligand>
</feature>
<feature type="binding site" evidence="2">
    <location>
        <position position="176"/>
    </location>
    <ligand>
        <name>FMN</name>
        <dbReference type="ChEBI" id="CHEBI:58210"/>
    </ligand>
</feature>
<feature type="binding site" evidence="2">
    <location>
        <begin position="211"/>
        <end position="213"/>
    </location>
    <ligand>
        <name>FMN</name>
        <dbReference type="ChEBI" id="CHEBI:58210"/>
    </ligand>
</feature>
<feature type="binding site" evidence="2">
    <location>
        <begin position="235"/>
        <end position="236"/>
    </location>
    <ligand>
        <name>FMN</name>
        <dbReference type="ChEBI" id="CHEBI:58210"/>
    </ligand>
</feature>
<accession>Q9HGN6</accession>
<gene>
    <name evidence="5 8" type="primary">dus1</name>
    <name type="ORF">SPBC36B7.04</name>
</gene>
<proteinExistence type="evidence at protein level"/>
<organism>
    <name type="scientific">Schizosaccharomyces pombe (strain 972 / ATCC 24843)</name>
    <name type="common">Fission yeast</name>
    <dbReference type="NCBI Taxonomy" id="284812"/>
    <lineage>
        <taxon>Eukaryota</taxon>
        <taxon>Fungi</taxon>
        <taxon>Dikarya</taxon>
        <taxon>Ascomycota</taxon>
        <taxon>Taphrinomycotina</taxon>
        <taxon>Schizosaccharomycetes</taxon>
        <taxon>Schizosaccharomycetales</taxon>
        <taxon>Schizosaccharomycetaceae</taxon>
        <taxon>Schizosaccharomyces</taxon>
    </lineage>
</organism>